<organism>
    <name type="scientific">Helicobacter pylori (strain ATCC 700392 / 26695)</name>
    <name type="common">Campylobacter pylori</name>
    <dbReference type="NCBI Taxonomy" id="85962"/>
    <lineage>
        <taxon>Bacteria</taxon>
        <taxon>Pseudomonadati</taxon>
        <taxon>Campylobacterota</taxon>
        <taxon>Epsilonproteobacteria</taxon>
        <taxon>Campylobacterales</taxon>
        <taxon>Helicobacteraceae</taxon>
        <taxon>Helicobacter</taxon>
    </lineage>
</organism>
<gene>
    <name type="primary">queD</name>
    <name type="ordered locus">HP_0933</name>
</gene>
<keyword id="KW-0456">Lyase</keyword>
<keyword id="KW-0479">Metal-binding</keyword>
<keyword id="KW-0671">Queuosine biosynthesis</keyword>
<keyword id="KW-1185">Reference proteome</keyword>
<keyword id="KW-0862">Zinc</keyword>
<accession>O25587</accession>
<dbReference type="EC" id="4.1.2.50"/>
<dbReference type="EMBL" id="AE000511">
    <property type="protein sequence ID" value="AAD07981.1"/>
    <property type="molecule type" value="Genomic_DNA"/>
</dbReference>
<dbReference type="PIR" id="E64636">
    <property type="entry name" value="E64636"/>
</dbReference>
<dbReference type="RefSeq" id="NP_207725.1">
    <property type="nucleotide sequence ID" value="NC_000915.1"/>
</dbReference>
<dbReference type="RefSeq" id="WP_000236875.1">
    <property type="nucleotide sequence ID" value="NC_018939.1"/>
</dbReference>
<dbReference type="SMR" id="O25587"/>
<dbReference type="DIP" id="DIP-3587N"/>
<dbReference type="IntAct" id="O25587">
    <property type="interactions" value="15"/>
</dbReference>
<dbReference type="MINT" id="O25587"/>
<dbReference type="STRING" id="85962.HP_0933"/>
<dbReference type="PaxDb" id="85962-C694_04800"/>
<dbReference type="EnsemblBacteria" id="AAD07981">
    <property type="protein sequence ID" value="AAD07981"/>
    <property type="gene ID" value="HP_0933"/>
</dbReference>
<dbReference type="KEGG" id="heo:C694_04800"/>
<dbReference type="KEGG" id="hpy:HP_0933"/>
<dbReference type="PATRIC" id="fig|85962.47.peg.998"/>
<dbReference type="eggNOG" id="COG0720">
    <property type="taxonomic scope" value="Bacteria"/>
</dbReference>
<dbReference type="InParanoid" id="O25587"/>
<dbReference type="OrthoDB" id="9804698at2"/>
<dbReference type="PhylomeDB" id="O25587"/>
<dbReference type="UniPathway" id="UPA00391"/>
<dbReference type="Proteomes" id="UP000000429">
    <property type="component" value="Chromosome"/>
</dbReference>
<dbReference type="GO" id="GO:0070497">
    <property type="term" value="F:6-carboxytetrahydropterin synthase activity"/>
    <property type="evidence" value="ECO:0000318"/>
    <property type="project" value="GO_Central"/>
</dbReference>
<dbReference type="GO" id="GO:0046872">
    <property type="term" value="F:metal ion binding"/>
    <property type="evidence" value="ECO:0007669"/>
    <property type="project" value="UniProtKB-KW"/>
</dbReference>
<dbReference type="GO" id="GO:0008616">
    <property type="term" value="P:queuosine biosynthetic process"/>
    <property type="evidence" value="ECO:0007669"/>
    <property type="project" value="UniProtKB-KW"/>
</dbReference>
<dbReference type="Gene3D" id="3.30.479.10">
    <property type="entry name" value="6-pyruvoyl tetrahydropterin synthase/QueD"/>
    <property type="match status" value="1"/>
</dbReference>
<dbReference type="InterPro" id="IPR007115">
    <property type="entry name" value="6-PTP_synth/QueD"/>
</dbReference>
<dbReference type="InterPro" id="IPR038418">
    <property type="entry name" value="6-PTP_synth/QueD_sf"/>
</dbReference>
<dbReference type="PANTHER" id="PTHR12589:SF7">
    <property type="entry name" value="6-PYRUVOYL TETRAHYDROBIOPTERIN SYNTHASE"/>
    <property type="match status" value="1"/>
</dbReference>
<dbReference type="PANTHER" id="PTHR12589">
    <property type="entry name" value="PYRUVOYL TETRAHYDROBIOPTERIN SYNTHASE"/>
    <property type="match status" value="1"/>
</dbReference>
<dbReference type="Pfam" id="PF01242">
    <property type="entry name" value="PTPS"/>
    <property type="match status" value="1"/>
</dbReference>
<dbReference type="SUPFAM" id="SSF55620">
    <property type="entry name" value="Tetrahydrobiopterin biosynthesis enzymes-like"/>
    <property type="match status" value="1"/>
</dbReference>
<feature type="chain" id="PRO_0000057926" description="6-carboxy-5,6,7,8-tetrahydropterin synthase">
    <location>
        <begin position="1"/>
        <end position="200"/>
    </location>
</feature>
<feature type="active site" description="Proton acceptor" evidence="1">
    <location>
        <position position="23"/>
    </location>
</feature>
<feature type="active site" description="Charge relay system" evidence="1">
    <location>
        <position position="68"/>
    </location>
</feature>
<feature type="active site" description="Charge relay system" evidence="1">
    <location>
        <position position="136"/>
    </location>
</feature>
<feature type="binding site" evidence="1">
    <location>
        <position position="13"/>
    </location>
    <ligand>
        <name>Zn(2+)</name>
        <dbReference type="ChEBI" id="CHEBI:29105"/>
    </ligand>
</feature>
<feature type="binding site" evidence="1">
    <location>
        <position position="28"/>
    </location>
    <ligand>
        <name>Zn(2+)</name>
        <dbReference type="ChEBI" id="CHEBI:29105"/>
    </ligand>
</feature>
<feature type="binding site" evidence="1">
    <location>
        <position position="30"/>
    </location>
    <ligand>
        <name>Zn(2+)</name>
        <dbReference type="ChEBI" id="CHEBI:29105"/>
    </ligand>
</feature>
<protein>
    <recommendedName>
        <fullName>6-carboxy-5,6,7,8-tetrahydropterin synthase</fullName>
        <shortName>CPH4 synthase</shortName>
        <ecNumber>4.1.2.50</ecNumber>
    </recommendedName>
    <alternativeName>
        <fullName>Queuosine biosynthesis protein QueD</fullName>
    </alternativeName>
</protein>
<evidence type="ECO:0000250" key="1"/>
<evidence type="ECO:0000305" key="2"/>
<proteinExistence type="inferred from homology"/>
<name>QUED_HELPY</name>
<comment type="function">
    <text evidence="1">Catalyzes the conversion of 7,8-dihydroneopterin triphosphate (H2NTP) to 6-carboxy-5,6,7,8-tetrahydropterin (CPH4) and acetaldehyde.</text>
</comment>
<comment type="catalytic activity">
    <reaction>
        <text>7,8-dihydroneopterin 3'-triphosphate + H2O = 6-carboxy-5,6,7,8-tetrahydropterin + triphosphate + acetaldehyde + 2 H(+)</text>
        <dbReference type="Rhea" id="RHEA:27966"/>
        <dbReference type="ChEBI" id="CHEBI:15343"/>
        <dbReference type="ChEBI" id="CHEBI:15377"/>
        <dbReference type="ChEBI" id="CHEBI:15378"/>
        <dbReference type="ChEBI" id="CHEBI:18036"/>
        <dbReference type="ChEBI" id="CHEBI:58462"/>
        <dbReference type="ChEBI" id="CHEBI:61032"/>
        <dbReference type="EC" id="4.1.2.50"/>
    </reaction>
</comment>
<comment type="cofactor">
    <cofactor evidence="1">
        <name>Zn(2+)</name>
        <dbReference type="ChEBI" id="CHEBI:29105"/>
    </cofactor>
    <text evidence="1">Binds 1 zinc ion per subunit.</text>
</comment>
<comment type="pathway">
    <text>Purine metabolism; 7-cyano-7-deazaguanine biosynthesis.</text>
</comment>
<comment type="miscellaneous">
    <text evidence="1">The active site is at the interface between 2 subunits. The proton acceptor Cys is on one subunit, and the charge relay system is on the other subunit (By similarity).</text>
</comment>
<comment type="similarity">
    <text evidence="2">Belongs to the PTPS family. QueD subfamily.</text>
</comment>
<reference key="1">
    <citation type="journal article" date="1997" name="Nature">
        <title>The complete genome sequence of the gastric pathogen Helicobacter pylori.</title>
        <authorList>
            <person name="Tomb J.-F."/>
            <person name="White O."/>
            <person name="Kerlavage A.R."/>
            <person name="Clayton R.A."/>
            <person name="Sutton G.G."/>
            <person name="Fleischmann R.D."/>
            <person name="Ketchum K.A."/>
            <person name="Klenk H.-P."/>
            <person name="Gill S.R."/>
            <person name="Dougherty B.A."/>
            <person name="Nelson K.E."/>
            <person name="Quackenbush J."/>
            <person name="Zhou L."/>
            <person name="Kirkness E.F."/>
            <person name="Peterson S.N."/>
            <person name="Loftus B.J."/>
            <person name="Richardson D.L."/>
            <person name="Dodson R.J."/>
            <person name="Khalak H.G."/>
            <person name="Glodek A."/>
            <person name="McKenney K."/>
            <person name="FitzGerald L.M."/>
            <person name="Lee N."/>
            <person name="Adams M.D."/>
            <person name="Hickey E.K."/>
            <person name="Berg D.E."/>
            <person name="Gocayne J.D."/>
            <person name="Utterback T.R."/>
            <person name="Peterson J.D."/>
            <person name="Kelley J.M."/>
            <person name="Cotton M.D."/>
            <person name="Weidman J.F."/>
            <person name="Fujii C."/>
            <person name="Bowman C."/>
            <person name="Watthey L."/>
            <person name="Wallin E."/>
            <person name="Hayes W.S."/>
            <person name="Borodovsky M."/>
            <person name="Karp P.D."/>
            <person name="Smith H.O."/>
            <person name="Fraser C.M."/>
            <person name="Venter J.C."/>
        </authorList>
    </citation>
    <scope>NUCLEOTIDE SEQUENCE [LARGE SCALE GENOMIC DNA]</scope>
    <source>
        <strain>ATCC 700392 / 26695</strain>
    </source>
</reference>
<sequence length="200" mass="23663">MVIRRLYQFCASHVVRNCSSLKCAQNIHGHNYEVEVFIETNRLDNANMALDFGLMQQEMQVFIESFDHAHHFWDKESLEFQRFIENHCVRYVKCSFNLSAESYALMFLYYLTKILQKSVFSNDEGELKVSSVRVHETKNGYAESFLKDLENPHFKSLVHDHCVSFSQGIQNLWHDKDFFNKIISDEKQCFFHAKPLHQIP</sequence>